<proteinExistence type="evidence at protein level"/>
<protein>
    <recommendedName>
        <fullName>Bifunctional aspartate aminotransferase and L-aspartate beta-decarboxylase</fullName>
        <ecNumber evidence="2">2.6.1.1</ecNumber>
        <ecNumber evidence="3 4">4.1.1.12</ecNumber>
    </recommendedName>
    <alternativeName>
        <fullName>Aspartate 4-decarboxylase</fullName>
        <shortName>ASD</shortName>
        <shortName>AsdA</shortName>
    </alternativeName>
</protein>
<dbReference type="EC" id="2.6.1.1" evidence="2"/>
<dbReference type="EC" id="4.1.1.12" evidence="3 4"/>
<dbReference type="EMBL" id="AF168368">
    <property type="protein sequence ID" value="AAK58507.1"/>
    <property type="molecule type" value="Genomic_DNA"/>
</dbReference>
<dbReference type="RefSeq" id="WP_003054930.1">
    <property type="nucleotide sequence ID" value="NZ_CP140157.1"/>
</dbReference>
<dbReference type="PDB" id="2ZY3">
    <property type="method" value="X-ray"/>
    <property type="resolution" value="2.50 A"/>
    <property type="chains" value="A/B/C/D/E/F=1-533"/>
</dbReference>
<dbReference type="PDB" id="2ZY4">
    <property type="method" value="X-ray"/>
    <property type="resolution" value="2.00 A"/>
    <property type="chains" value="A/B/C/D/E/F=1-533"/>
</dbReference>
<dbReference type="PDB" id="2ZY5">
    <property type="method" value="X-ray"/>
    <property type="resolution" value="2.65 A"/>
    <property type="chains" value="A/B/C/D/E/F=1-533"/>
</dbReference>
<dbReference type="PDBsum" id="2ZY3"/>
<dbReference type="PDBsum" id="2ZY4"/>
<dbReference type="PDBsum" id="2ZY5"/>
<dbReference type="SMR" id="Q93QX0"/>
<dbReference type="DIP" id="DIP-48316N"/>
<dbReference type="BRENDA" id="4.1.1.12">
    <property type="organism ID" value="1590"/>
</dbReference>
<dbReference type="EvolutionaryTrace" id="Q93QX0"/>
<dbReference type="GO" id="GO:0047688">
    <property type="term" value="F:aspartate 4-decarboxylase activity"/>
    <property type="evidence" value="ECO:0000314"/>
    <property type="project" value="UniProtKB"/>
</dbReference>
<dbReference type="GO" id="GO:0042802">
    <property type="term" value="F:identical protein binding"/>
    <property type="evidence" value="ECO:0000353"/>
    <property type="project" value="IntAct"/>
</dbReference>
<dbReference type="GO" id="GO:0004069">
    <property type="term" value="F:L-aspartate:2-oxoglutarate aminotransferase activity"/>
    <property type="evidence" value="ECO:0007669"/>
    <property type="project" value="UniProtKB-EC"/>
</dbReference>
<dbReference type="GO" id="GO:0030170">
    <property type="term" value="F:pyridoxal phosphate binding"/>
    <property type="evidence" value="ECO:0007669"/>
    <property type="project" value="InterPro"/>
</dbReference>
<dbReference type="GO" id="GO:0006523">
    <property type="term" value="P:alanine biosynthetic process"/>
    <property type="evidence" value="ECO:0000314"/>
    <property type="project" value="UniProtKB"/>
</dbReference>
<dbReference type="GO" id="GO:0006531">
    <property type="term" value="P:aspartate metabolic process"/>
    <property type="evidence" value="ECO:0000314"/>
    <property type="project" value="UniProtKB"/>
</dbReference>
<dbReference type="CDD" id="cd00609">
    <property type="entry name" value="AAT_like"/>
    <property type="match status" value="1"/>
</dbReference>
<dbReference type="FunFam" id="3.40.640.10:FF:000126">
    <property type="entry name" value="Aminotransferase"/>
    <property type="match status" value="1"/>
</dbReference>
<dbReference type="Gene3D" id="1.10.20.110">
    <property type="match status" value="1"/>
</dbReference>
<dbReference type="Gene3D" id="3.90.1150.10">
    <property type="entry name" value="Aspartate Aminotransferase, domain 1"/>
    <property type="match status" value="1"/>
</dbReference>
<dbReference type="Gene3D" id="3.40.640.10">
    <property type="entry name" value="Type I PLP-dependent aspartate aminotransferase-like (Major domain)"/>
    <property type="match status" value="1"/>
</dbReference>
<dbReference type="InterPro" id="IPR004839">
    <property type="entry name" value="Aminotransferase_I/II_large"/>
</dbReference>
<dbReference type="InterPro" id="IPR022518">
    <property type="entry name" value="Aspartate_4-decarboxylase"/>
</dbReference>
<dbReference type="InterPro" id="IPR050596">
    <property type="entry name" value="AspAT/PAT-like"/>
</dbReference>
<dbReference type="InterPro" id="IPR004838">
    <property type="entry name" value="NHTrfase_class1_PyrdxlP-BS"/>
</dbReference>
<dbReference type="InterPro" id="IPR015424">
    <property type="entry name" value="PyrdxlP-dep_Trfase"/>
</dbReference>
<dbReference type="InterPro" id="IPR015421">
    <property type="entry name" value="PyrdxlP-dep_Trfase_major"/>
</dbReference>
<dbReference type="InterPro" id="IPR015422">
    <property type="entry name" value="PyrdxlP-dep_Trfase_small"/>
</dbReference>
<dbReference type="NCBIfam" id="TIGR03801">
    <property type="entry name" value="asp_4_decarbox"/>
    <property type="match status" value="1"/>
</dbReference>
<dbReference type="NCBIfam" id="NF006755">
    <property type="entry name" value="PRK09275.1"/>
    <property type="match status" value="1"/>
</dbReference>
<dbReference type="PANTHER" id="PTHR46383">
    <property type="entry name" value="ASPARTATE AMINOTRANSFERASE"/>
    <property type="match status" value="1"/>
</dbReference>
<dbReference type="PANTHER" id="PTHR46383:SF1">
    <property type="entry name" value="ASPARTATE AMINOTRANSFERASE"/>
    <property type="match status" value="1"/>
</dbReference>
<dbReference type="Pfam" id="PF00155">
    <property type="entry name" value="Aminotran_1_2"/>
    <property type="match status" value="1"/>
</dbReference>
<dbReference type="SUPFAM" id="SSF53383">
    <property type="entry name" value="PLP-dependent transferases"/>
    <property type="match status" value="1"/>
</dbReference>
<dbReference type="PROSITE" id="PS00105">
    <property type="entry name" value="AA_TRANSFER_CLASS_1"/>
    <property type="match status" value="1"/>
</dbReference>
<reference key="1">
    <citation type="journal article" date="2000" name="J. Ind. Microbiol. Biotechnol.">
        <title>Cloning, expression and characterization of L-aspartate - decarboxylase gene from Alcaligenes faecalis CCRC 11585.</title>
        <authorList>
            <person name="Chen C.-C."/>
            <person name="Chou T.-L."/>
            <person name="Lee C.-Y."/>
        </authorList>
    </citation>
    <scope>NUCLEOTIDE SEQUENCE [GENOMIC DNA]</scope>
    <scope>CATALYTIC ACTIVITY</scope>
    <scope>FUNCTION</scope>
    <scope>BIOPHYSICOCHEMICAL PROPERTIES</scope>
    <scope>BIOTECHNOLOGY</scope>
    <source>
        <strain>ATCC 25094 / DSM 30032 / N</strain>
    </source>
</reference>
<reference key="2">
    <citation type="journal article" date="2009" name="Structure">
        <title>Structure, assembly, and mechanism of a PLP-dependent dodecameric L-aspartate beta-decarboxylase.</title>
        <authorList>
            <person name="Chen H.J."/>
            <person name="Ko T.P."/>
            <person name="Lee C.Y."/>
            <person name="Wang N.C."/>
            <person name="Wang A.H."/>
        </authorList>
    </citation>
    <scope>X-RAY CRYSTALLOGRAPHY (2.00 ANGSTROMS) IN COMPLEX WITH PLP</scope>
    <scope>CATALYTIC ACTIVITY</scope>
    <scope>FUNCTION</scope>
    <scope>SUBUNIT</scope>
    <scope>COFACTOR</scope>
    <scope>MUTAGENESIS OF TYR-134; LYS-315 AND ARG-487</scope>
    <source>
        <strain>ATCC 25094 / DSM 30032 / N</strain>
    </source>
</reference>
<gene>
    <name evidence="5" type="primary">asD</name>
</gene>
<feature type="chain" id="PRO_0000419123" description="Bifunctional aspartate aminotransferase and L-aspartate beta-decarboxylase">
    <location>
        <begin position="1"/>
        <end position="533"/>
    </location>
</feature>
<feature type="binding site" evidence="1">
    <location>
        <position position="115"/>
    </location>
    <ligand>
        <name>L-aspartate</name>
        <dbReference type="ChEBI" id="CHEBI:29991"/>
    </ligand>
</feature>
<feature type="binding site" evidence="1">
    <location>
        <position position="256"/>
    </location>
    <ligand>
        <name>L-aspartate</name>
        <dbReference type="ChEBI" id="CHEBI:29991"/>
    </ligand>
</feature>
<feature type="binding site" evidence="1">
    <location>
        <position position="497"/>
    </location>
    <ligand>
        <name>L-aspartate</name>
        <dbReference type="ChEBI" id="CHEBI:29991"/>
    </ligand>
</feature>
<feature type="modified residue" description="N6-(pyridoxal phosphate)lysine" evidence="3 7 8 9">
    <location>
        <position position="315"/>
    </location>
</feature>
<feature type="mutagenesis site" description="Slightly reduced activity." evidence="3">
    <original>Y</original>
    <variation>F</variation>
    <location>
        <position position="134"/>
    </location>
</feature>
<feature type="mutagenesis site" description="Slightly reduced activity." evidence="3">
    <original>K</original>
    <variation>A</variation>
    <location>
        <position position="315"/>
    </location>
</feature>
<feature type="mutagenesis site" description="Loss of activity." evidence="3">
    <original>R</original>
    <variation>A</variation>
    <location>
        <position position="487"/>
    </location>
</feature>
<feature type="helix" evidence="11">
    <location>
        <begin position="3"/>
        <end position="6"/>
    </location>
</feature>
<feature type="helix" evidence="11">
    <location>
        <begin position="13"/>
        <end position="23"/>
    </location>
</feature>
<feature type="helix" evidence="11">
    <location>
        <begin position="27"/>
        <end position="35"/>
    </location>
</feature>
<feature type="strand" evidence="11">
    <location>
        <begin position="41"/>
        <end position="44"/>
    </location>
</feature>
<feature type="helix" evidence="11">
    <location>
        <begin position="46"/>
        <end position="63"/>
    </location>
</feature>
<feature type="strand" evidence="11">
    <location>
        <begin position="74"/>
        <end position="76"/>
    </location>
</feature>
<feature type="helix" evidence="11">
    <location>
        <begin position="83"/>
        <end position="93"/>
    </location>
</feature>
<feature type="turn" evidence="11">
    <location>
        <begin position="94"/>
        <end position="96"/>
    </location>
</feature>
<feature type="helix" evidence="11">
    <location>
        <begin position="98"/>
        <end position="112"/>
    </location>
</feature>
<feature type="helix" evidence="11">
    <location>
        <begin position="118"/>
        <end position="130"/>
    </location>
</feature>
<feature type="strand" evidence="11">
    <location>
        <begin position="136"/>
        <end position="139"/>
    </location>
</feature>
<feature type="helix" evidence="11">
    <location>
        <begin position="142"/>
        <end position="155"/>
    </location>
</feature>
<feature type="helix" evidence="11">
    <location>
        <begin position="163"/>
        <end position="165"/>
    </location>
</feature>
<feature type="strand" evidence="11">
    <location>
        <begin position="166"/>
        <end position="172"/>
    </location>
</feature>
<feature type="helix" evidence="11">
    <location>
        <begin position="173"/>
        <end position="187"/>
    </location>
</feature>
<feature type="strand" evidence="11">
    <location>
        <begin position="196"/>
        <end position="202"/>
    </location>
</feature>
<feature type="helix" evidence="11">
    <location>
        <begin position="205"/>
        <end position="212"/>
    </location>
</feature>
<feature type="turn" evidence="10">
    <location>
        <begin position="214"/>
        <end position="216"/>
    </location>
</feature>
<feature type="strand" evidence="11">
    <location>
        <begin position="219"/>
        <end position="224"/>
    </location>
</feature>
<feature type="helix" evidence="11">
    <location>
        <begin position="227"/>
        <end position="229"/>
    </location>
</feature>
<feature type="helix" evidence="11">
    <location>
        <begin position="235"/>
        <end position="238"/>
    </location>
</feature>
<feature type="helix" evidence="11">
    <location>
        <begin position="239"/>
        <end position="242"/>
    </location>
</feature>
<feature type="strand" evidence="11">
    <location>
        <begin position="246"/>
        <end position="254"/>
    </location>
</feature>
<feature type="strand" evidence="11">
    <location>
        <begin position="256"/>
        <end position="258"/>
    </location>
</feature>
<feature type="helix" evidence="11">
    <location>
        <begin position="264"/>
        <end position="276"/>
    </location>
</feature>
<feature type="strand" evidence="11">
    <location>
        <begin position="282"/>
        <end position="286"/>
    </location>
</feature>
<feature type="helix" evidence="11">
    <location>
        <begin position="290"/>
        <end position="292"/>
    </location>
</feature>
<feature type="strand" evidence="10">
    <location>
        <begin position="293"/>
        <end position="295"/>
    </location>
</feature>
<feature type="helix" evidence="11">
    <location>
        <begin position="299"/>
        <end position="302"/>
    </location>
</feature>
<feature type="helix" evidence="11">
    <location>
        <begin position="304"/>
        <end position="306"/>
    </location>
</feature>
<feature type="strand" evidence="11">
    <location>
        <begin position="307"/>
        <end position="313"/>
    </location>
</feature>
<feature type="turn" evidence="11">
    <location>
        <begin position="314"/>
        <end position="318"/>
    </location>
</feature>
<feature type="helix" evidence="11">
    <location>
        <begin position="320"/>
        <end position="322"/>
    </location>
</feature>
<feature type="strand" evidence="11">
    <location>
        <begin position="324"/>
        <end position="332"/>
    </location>
</feature>
<feature type="helix" evidence="11">
    <location>
        <begin position="334"/>
        <end position="340"/>
    </location>
</feature>
<feature type="helix" evidence="11">
    <location>
        <begin position="344"/>
        <end position="354"/>
    </location>
</feature>
<feature type="turn" evidence="11">
    <location>
        <begin position="355"/>
        <end position="357"/>
    </location>
</feature>
<feature type="helix" evidence="11">
    <location>
        <begin position="361"/>
        <end position="363"/>
    </location>
</feature>
<feature type="helix" evidence="11">
    <location>
        <begin position="366"/>
        <end position="373"/>
    </location>
</feature>
<feature type="turn" evidence="11">
    <location>
        <begin position="374"/>
        <end position="379"/>
    </location>
</feature>
<feature type="helix" evidence="11">
    <location>
        <begin position="380"/>
        <end position="382"/>
    </location>
</feature>
<feature type="helix" evidence="11">
    <location>
        <begin position="387"/>
        <end position="402"/>
    </location>
</feature>
<feature type="helix" evidence="11">
    <location>
        <begin position="407"/>
        <end position="424"/>
    </location>
</feature>
<feature type="helix" evidence="11">
    <location>
        <begin position="425"/>
        <end position="427"/>
    </location>
</feature>
<feature type="strand" evidence="11">
    <location>
        <begin position="440"/>
        <end position="445"/>
    </location>
</feature>
<feature type="helix" evidence="11">
    <location>
        <begin position="446"/>
        <end position="454"/>
    </location>
</feature>
<feature type="helix" evidence="11">
    <location>
        <begin position="456"/>
        <end position="465"/>
    </location>
</feature>
<feature type="helix" evidence="11">
    <location>
        <begin position="468"/>
        <end position="479"/>
    </location>
</feature>
<feature type="strand" evidence="11">
    <location>
        <begin position="484"/>
        <end position="487"/>
    </location>
</feature>
<feature type="strand" evidence="11">
    <location>
        <begin position="495"/>
        <end position="503"/>
    </location>
</feature>
<feature type="helix" evidence="11">
    <location>
        <begin position="505"/>
        <end position="525"/>
    </location>
</feature>
<feature type="helix" evidence="11">
    <location>
        <begin position="529"/>
        <end position="533"/>
    </location>
</feature>
<evidence type="ECO:0000250" key="1"/>
<evidence type="ECO:0000250" key="2">
    <source>
        <dbReference type="UniProtKB" id="Q53IZ1"/>
    </source>
</evidence>
<evidence type="ECO:0000269" key="3">
    <source>
    </source>
</evidence>
<evidence type="ECO:0000269" key="4">
    <source ref="1"/>
</evidence>
<evidence type="ECO:0000303" key="5">
    <source ref="1"/>
</evidence>
<evidence type="ECO:0000305" key="6"/>
<evidence type="ECO:0007744" key="7">
    <source>
        <dbReference type="PDB" id="2ZY3"/>
    </source>
</evidence>
<evidence type="ECO:0007744" key="8">
    <source>
        <dbReference type="PDB" id="2ZY4"/>
    </source>
</evidence>
<evidence type="ECO:0007744" key="9">
    <source>
        <dbReference type="PDB" id="2ZY5"/>
    </source>
</evidence>
<evidence type="ECO:0007829" key="10">
    <source>
        <dbReference type="PDB" id="2ZY3"/>
    </source>
</evidence>
<evidence type="ECO:0007829" key="11">
    <source>
        <dbReference type="PDB" id="2ZY4"/>
    </source>
</evidence>
<comment type="function">
    <text evidence="3 4">Bifunctional enzyme that has both L-aspartate decarboxylase and transaminase activity.</text>
</comment>
<comment type="catalytic activity">
    <reaction evidence="3 4">
        <text>L-aspartate + H(+) = L-alanine + CO2</text>
        <dbReference type="Rhea" id="RHEA:12621"/>
        <dbReference type="ChEBI" id="CHEBI:15378"/>
        <dbReference type="ChEBI" id="CHEBI:16526"/>
        <dbReference type="ChEBI" id="CHEBI:29991"/>
        <dbReference type="ChEBI" id="CHEBI:57972"/>
        <dbReference type="EC" id="4.1.1.12"/>
    </reaction>
</comment>
<comment type="catalytic activity">
    <reaction evidence="2">
        <text>L-aspartate + 2-oxoglutarate = oxaloacetate + L-glutamate</text>
        <dbReference type="Rhea" id="RHEA:21824"/>
        <dbReference type="ChEBI" id="CHEBI:16452"/>
        <dbReference type="ChEBI" id="CHEBI:16810"/>
        <dbReference type="ChEBI" id="CHEBI:29985"/>
        <dbReference type="ChEBI" id="CHEBI:29991"/>
        <dbReference type="EC" id="2.6.1.1"/>
    </reaction>
</comment>
<comment type="cofactor">
    <cofactor evidence="3">
        <name>pyridoxal 5'-phosphate</name>
        <dbReference type="ChEBI" id="CHEBI:597326"/>
    </cofactor>
</comment>
<comment type="biophysicochemical properties">
    <kinetics>
        <KM evidence="4">9 mM for L-aspartate</KM>
    </kinetics>
    <phDependence>
        <text evidence="4">Optimum pH is 5.</text>
    </phDependence>
    <temperatureDependence>
        <text evidence="4">Optimum temperature is 45 degrees Celsius.</text>
    </temperatureDependence>
</comment>
<comment type="subunit">
    <text evidence="3">Homododecamer.</text>
</comment>
<comment type="interaction">
    <interactant intactId="EBI-15768961">
        <id>Q93QX0</id>
    </interactant>
    <interactant intactId="EBI-15768961">
        <id>Q93QX0</id>
        <label>asD</label>
    </interactant>
    <organismsDiffer>false</organismsDiffer>
    <experiments>3</experiments>
</comment>
<comment type="biotechnology">
    <text evidence="4">Is highly specific for L-aspartic acid, and so can be used to produce L-alanine and D-aspartic acid from DL-aspartic acid.</text>
</comment>
<comment type="similarity">
    <text evidence="6">Belongs to the class-I pyridoxal-phosphate-dependent aminotransferase family.</text>
</comment>
<keyword id="KW-0002">3D-structure</keyword>
<keyword id="KW-0028">Amino-acid biosynthesis</keyword>
<keyword id="KW-0032">Aminotransferase</keyword>
<keyword id="KW-0210">Decarboxylase</keyword>
<keyword id="KW-0456">Lyase</keyword>
<keyword id="KW-0663">Pyridoxal phosphate</keyword>
<keyword id="KW-0808">Transferase</keyword>
<name>ASDA_COMTE</name>
<accession>Q93QX0</accession>
<sequence length="533" mass="59584">MSKDYQSLAKLSPFELKDELIKIASSDGNRLMLNAGRGNPNFLATTPRRAFFRLGLFAAAESELSYSYMTTVGVGGLAKIDGIEGRFERYIAENRDQEGVRFLGKSLSYVRDQLGLDPAAFLHEMVDGILGCNYPVPPRMLNISEKIVRQYIIREMGADAIPSESVNLFAVEGGTAAMAYIFESLKLNGLLKAGDKVAIGMPVFTPYIEIPELAQYALEEVAINADPSLNWQYPDSELDKLKDPAIKIFFCVNPSNPPSVKMDQRSLERVRNIVAEHRPDLMILTDDVYGTFADDFQSLFAICPENTLLVYSFSKYFGATGWRLGVVAAHQQNVFDLALDKLQESEKVALDHRYRSLLPDVRSLKFIDRLVADSRAVALNHTAGLSTPQQVQMALFSLFALMDEADEYKHTLKQLIRRRETTLYRELGMPPLRDENAVDYYTLIDLQDVTAKLYGEAFSEWAVKQSSTGDMLFRIADETGIVLLPGRGFGSNRPSGRASLANLNEYEYAAIGRALRKMADELYAEYSGQAQNL</sequence>
<organism>
    <name type="scientific">Comamonas testosteroni</name>
    <name type="common">Pseudomonas testosteroni</name>
    <dbReference type="NCBI Taxonomy" id="285"/>
    <lineage>
        <taxon>Bacteria</taxon>
        <taxon>Pseudomonadati</taxon>
        <taxon>Pseudomonadota</taxon>
        <taxon>Betaproteobacteria</taxon>
        <taxon>Burkholderiales</taxon>
        <taxon>Comamonadaceae</taxon>
        <taxon>Comamonas</taxon>
    </lineage>
</organism>